<keyword id="KW-0002">3D-structure</keyword>
<keyword id="KW-0186">Copper</keyword>
<keyword id="KW-0249">Electron transport</keyword>
<keyword id="KW-0472">Membrane</keyword>
<keyword id="KW-0479">Metal-binding</keyword>
<keyword id="KW-0732">Signal</keyword>
<keyword id="KW-0793">Thylakoid</keyword>
<keyword id="KW-0813">Transport</keyword>
<evidence type="ECO:0000255" key="1">
    <source>
        <dbReference type="HAMAP-Rule" id="MF_00566"/>
    </source>
</evidence>
<evidence type="ECO:0000269" key="2">
    <source>
    </source>
</evidence>
<evidence type="ECO:0000305" key="3"/>
<evidence type="ECO:0007829" key="4">
    <source>
        <dbReference type="PDB" id="1B3I"/>
    </source>
</evidence>
<evidence type="ECO:0007829" key="5">
    <source>
        <dbReference type="PDB" id="2B3I"/>
    </source>
</evidence>
<proteinExistence type="evidence at protein level"/>
<protein>
    <recommendedName>
        <fullName>Plastocyanin</fullName>
    </recommendedName>
</protein>
<name>PLAS_PROHO</name>
<dbReference type="EMBL" id="U13912">
    <property type="protein sequence ID" value="AAD09144.1"/>
    <property type="molecule type" value="Genomic_DNA"/>
</dbReference>
<dbReference type="PIR" id="A44637">
    <property type="entry name" value="A44637"/>
</dbReference>
<dbReference type="PDB" id="1B3I">
    <property type="method" value="NMR"/>
    <property type="chains" value="A=35-131"/>
</dbReference>
<dbReference type="PDB" id="2B3I">
    <property type="method" value="NMR"/>
    <property type="chains" value="A=35-131"/>
</dbReference>
<dbReference type="PDB" id="2JXM">
    <property type="method" value="NMR"/>
    <property type="chains" value="A=35-131"/>
</dbReference>
<dbReference type="PDBsum" id="1B3I"/>
<dbReference type="PDBsum" id="2B3I"/>
<dbReference type="PDBsum" id="2JXM"/>
<dbReference type="BMRB" id="P50057"/>
<dbReference type="SMR" id="P50057"/>
<dbReference type="EvolutionaryTrace" id="P50057"/>
<dbReference type="GO" id="GO:0031676">
    <property type="term" value="C:plasma membrane-derived thylakoid membrane"/>
    <property type="evidence" value="ECO:0007669"/>
    <property type="project" value="UniProtKB-SubCell"/>
</dbReference>
<dbReference type="GO" id="GO:0005507">
    <property type="term" value="F:copper ion binding"/>
    <property type="evidence" value="ECO:0007669"/>
    <property type="project" value="UniProtKB-UniRule"/>
</dbReference>
<dbReference type="GO" id="GO:0009055">
    <property type="term" value="F:electron transfer activity"/>
    <property type="evidence" value="ECO:0007669"/>
    <property type="project" value="UniProtKB-UniRule"/>
</dbReference>
<dbReference type="CDD" id="cd04219">
    <property type="entry name" value="Plastocyanin"/>
    <property type="match status" value="1"/>
</dbReference>
<dbReference type="Gene3D" id="2.60.40.420">
    <property type="entry name" value="Cupredoxins - blue copper proteins"/>
    <property type="match status" value="1"/>
</dbReference>
<dbReference type="HAMAP" id="MF_00566">
    <property type="entry name" value="Cytb6_f_plastocyanin"/>
    <property type="match status" value="1"/>
</dbReference>
<dbReference type="InterPro" id="IPR000923">
    <property type="entry name" value="BlueCu_1"/>
</dbReference>
<dbReference type="InterPro" id="IPR028871">
    <property type="entry name" value="BlueCu_1_BS"/>
</dbReference>
<dbReference type="InterPro" id="IPR001235">
    <property type="entry name" value="Copper_blue_Plastocyanin"/>
</dbReference>
<dbReference type="InterPro" id="IPR008972">
    <property type="entry name" value="Cupredoxin"/>
</dbReference>
<dbReference type="InterPro" id="IPR002387">
    <property type="entry name" value="Plastocyanin"/>
</dbReference>
<dbReference type="InterPro" id="IPR023511">
    <property type="entry name" value="Plastocyanin_cyanobac"/>
</dbReference>
<dbReference type="NCBIfam" id="TIGR02656">
    <property type="entry name" value="cyanin_plasto"/>
    <property type="match status" value="1"/>
</dbReference>
<dbReference type="PANTHER" id="PTHR34192">
    <property type="entry name" value="PLASTOCYANIN MAJOR ISOFORM, CHLOROPLASTIC-RELATED"/>
    <property type="match status" value="1"/>
</dbReference>
<dbReference type="PANTHER" id="PTHR34192:SF10">
    <property type="entry name" value="PLASTOCYANIN MAJOR ISOFORM, CHLOROPLASTIC-RELATED"/>
    <property type="match status" value="1"/>
</dbReference>
<dbReference type="Pfam" id="PF00127">
    <property type="entry name" value="Copper-bind"/>
    <property type="match status" value="1"/>
</dbReference>
<dbReference type="PRINTS" id="PR00156">
    <property type="entry name" value="COPPERBLUE"/>
</dbReference>
<dbReference type="PRINTS" id="PR00157">
    <property type="entry name" value="PLASTOCYANIN"/>
</dbReference>
<dbReference type="SUPFAM" id="SSF49503">
    <property type="entry name" value="Cupredoxins"/>
    <property type="match status" value="1"/>
</dbReference>
<dbReference type="PROSITE" id="PS00196">
    <property type="entry name" value="COPPER_BLUE"/>
    <property type="match status" value="1"/>
</dbReference>
<gene>
    <name type="primary">petE</name>
</gene>
<sequence>MKFFASLSKRFAPVLSLVVLVAGTLLLSAAPASAATVQIKMGTDKYAPLYEPKALSISAGDTVEFVMNKVGPHNVIFDKVPAGESAPALSNTKLAIAPGSFYSVTLGTPGTYSFYCTPHRGAGMVGTITVE</sequence>
<reference key="1">
    <citation type="journal article" date="1994" name="Biochim. Biophys. Acta">
        <title>Nucleotide sequence of the petE gene encoding plastocyanin from the photosynthetic prokaryote, Prochlorothrix hollandica.</title>
        <authorList>
            <person name="Arudchandran A."/>
            <person name="Seeburg D."/>
            <person name="Burkhart W."/>
            <person name="Bullerjahn G.S."/>
        </authorList>
    </citation>
    <scope>NUCLEOTIDE SEQUENCE [GENOMIC DNA]</scope>
    <source>
        <strain>CCAP 1490/1 / SAG 10.89 / ACC 15-2</strain>
    </source>
</reference>
<reference key="2">
    <citation type="journal article" date="1999" name="Biochemistry">
        <title>NMR solution structure of plastocyanin from the photosynthetic prokaryote, Prochlorothrix hollandica.</title>
        <authorList>
            <person name="Babu C.R."/>
            <person name="Volkman B.F."/>
            <person name="Bullerjahn G.S."/>
        </authorList>
    </citation>
    <scope>STRUCTURE BY NMR OF 35-131</scope>
    <scope>SEQUENCE REVISION TO 95</scope>
    <scope>FUNCTION</scope>
    <scope>COFACTOR</scope>
    <scope>SUBCELLULAR LOCATION</scope>
</reference>
<organism>
    <name type="scientific">Prochlorothrix hollandica</name>
    <dbReference type="NCBI Taxonomy" id="1223"/>
    <lineage>
        <taxon>Bacteria</taxon>
        <taxon>Bacillati</taxon>
        <taxon>Cyanobacteriota</taxon>
        <taxon>Cyanophyceae</taxon>
        <taxon>Prochlorotrichales</taxon>
        <taxon>Prochlorotrichaceae</taxon>
        <taxon>Prochlorothrix</taxon>
    </lineage>
</organism>
<feature type="signal peptide">
    <location>
        <begin position="1"/>
        <end position="34"/>
    </location>
</feature>
<feature type="chain" id="PRO_0000002902" description="Plastocyanin">
    <location>
        <begin position="35"/>
        <end position="131"/>
    </location>
</feature>
<feature type="domain" description="Plastocyanin-like">
    <location>
        <begin position="35"/>
        <end position="131"/>
    </location>
</feature>
<feature type="binding site" evidence="3">
    <location>
        <position position="73"/>
    </location>
    <ligand>
        <name>Cu cation</name>
        <dbReference type="ChEBI" id="CHEBI:23378"/>
    </ligand>
</feature>
<feature type="binding site" evidence="3">
    <location>
        <position position="116"/>
    </location>
    <ligand>
        <name>Cu cation</name>
        <dbReference type="ChEBI" id="CHEBI:23378"/>
    </ligand>
</feature>
<feature type="binding site" evidence="3">
    <location>
        <position position="119"/>
    </location>
    <ligand>
        <name>Cu cation</name>
        <dbReference type="ChEBI" id="CHEBI:23378"/>
    </ligand>
</feature>
<feature type="binding site" evidence="1">
    <location>
        <position position="124"/>
    </location>
    <ligand>
        <name>Cu cation</name>
        <dbReference type="ChEBI" id="CHEBI:23378"/>
    </ligand>
</feature>
<feature type="sequence conflict" description="In Ref. 1; AAD09144." evidence="3" ref="1">
    <original>A</original>
    <variation>R</variation>
    <location>
        <position position="95"/>
    </location>
</feature>
<feature type="strand" evidence="4">
    <location>
        <begin position="37"/>
        <end position="43"/>
    </location>
</feature>
<feature type="turn" evidence="4">
    <location>
        <begin position="44"/>
        <end position="46"/>
    </location>
</feature>
<feature type="strand" evidence="4">
    <location>
        <begin position="47"/>
        <end position="57"/>
    </location>
</feature>
<feature type="strand" evidence="4">
    <location>
        <begin position="62"/>
        <end position="67"/>
    </location>
</feature>
<feature type="strand" evidence="5">
    <location>
        <begin position="69"/>
        <end position="71"/>
    </location>
</feature>
<feature type="strand" evidence="4">
    <location>
        <begin position="75"/>
        <end position="79"/>
    </location>
</feature>
<feature type="helix" evidence="4">
    <location>
        <begin position="86"/>
        <end position="89"/>
    </location>
</feature>
<feature type="strand" evidence="5">
    <location>
        <begin position="91"/>
        <end position="95"/>
    </location>
</feature>
<feature type="strand" evidence="4">
    <location>
        <begin position="102"/>
        <end position="105"/>
    </location>
</feature>
<feature type="strand" evidence="4">
    <location>
        <begin position="110"/>
        <end position="115"/>
    </location>
</feature>
<feature type="turn" evidence="4">
    <location>
        <begin position="119"/>
        <end position="123"/>
    </location>
</feature>
<feature type="strand" evidence="4">
    <location>
        <begin position="125"/>
        <end position="130"/>
    </location>
</feature>
<comment type="function">
    <text evidence="1 2">Participates in electron transfer between P700 and the cytochrome b6-f complex in photosystem I.</text>
</comment>
<comment type="cofactor">
    <cofactor evidence="1 2">
        <name>Cu(2+)</name>
        <dbReference type="ChEBI" id="CHEBI:29036"/>
    </cofactor>
</comment>
<comment type="subcellular location">
    <subcellularLocation>
        <location evidence="2">Cellular thylakoid membrane</location>
        <topology evidence="2">Peripheral membrane protein</topology>
        <orientation evidence="2">Lumenal side</orientation>
    </subcellularLocation>
    <text>Loosely bound to the thylakoid inner membrane surface (PubMed:10213601).</text>
</comment>
<comment type="similarity">
    <text evidence="1">Belongs to the plastocyanin family.</text>
</comment>
<accession>P50057</accession>